<proteinExistence type="inferred from homology"/>
<accession>Q67JG9</accession>
<protein>
    <recommendedName>
        <fullName evidence="1">tRNA(Ile)-lysidine synthase</fullName>
        <ecNumber evidence="1">6.3.4.19</ecNumber>
    </recommendedName>
    <alternativeName>
        <fullName evidence="1">tRNA(Ile)-2-lysyl-cytidine synthase</fullName>
    </alternativeName>
    <alternativeName>
        <fullName evidence="1">tRNA(Ile)-lysidine synthetase</fullName>
    </alternativeName>
</protein>
<sequence length="482" mass="52556">MPLLDRVREYVVRHGMLEPGDRVIVAVSGGPDSLALTHVLYRLAPAWRLSLHLFHLDHGLRGEASRADAAFVADLARELSLPLTTVTLRPGELEAMRGSLEDNARRRRYAEMARLAAAIGAQRAATGHNRNDQAETVLMRLLRGSGSTGLAGIPPVRREGGLTIIRPLLGASRQEILAYCRAHGLTPRMDATNLQGDFERNRIRLEILPALTERFGDAVVDNLAQTADLLREEDRLLAELTREACARCGWRETGEATGEPVVELDGTLLVQEPLALARRIVRMAVQRVSGSAYGPGLSAVTRALELAGRTEGSHWLDLPQGVRLSVAYGRCRFARSHPQLGPGAEALEQVWPVAVPGETAIPALGVTVAAELVPPSAMPARLPDDEMWLDRDRLPGPLAVRTRRPGDRLWPAGMQGSKKLQDILVDAKVPRDQRDGLPLLVAGDTVVWVPGVIRDRRFRPDAGTRSAVRVTVRRRPEGSGGD</sequence>
<feature type="chain" id="PRO_0000181786" description="tRNA(Ile)-lysidine synthase">
    <location>
        <begin position="1"/>
        <end position="482"/>
    </location>
</feature>
<feature type="binding site" evidence="1">
    <location>
        <begin position="28"/>
        <end position="33"/>
    </location>
    <ligand>
        <name>ATP</name>
        <dbReference type="ChEBI" id="CHEBI:30616"/>
    </ligand>
</feature>
<keyword id="KW-0067">ATP-binding</keyword>
<keyword id="KW-0963">Cytoplasm</keyword>
<keyword id="KW-0436">Ligase</keyword>
<keyword id="KW-0547">Nucleotide-binding</keyword>
<keyword id="KW-1185">Reference proteome</keyword>
<keyword id="KW-0819">tRNA processing</keyword>
<dbReference type="EC" id="6.3.4.19" evidence="1"/>
<dbReference type="EMBL" id="AP006840">
    <property type="protein sequence ID" value="BAD42181.1"/>
    <property type="molecule type" value="Genomic_DNA"/>
</dbReference>
<dbReference type="RefSeq" id="WP_011197312.1">
    <property type="nucleotide sequence ID" value="NC_006177.1"/>
</dbReference>
<dbReference type="SMR" id="Q67JG9"/>
<dbReference type="STRING" id="292459.STH3199"/>
<dbReference type="KEGG" id="sth:STH3199"/>
<dbReference type="eggNOG" id="COG0037">
    <property type="taxonomic scope" value="Bacteria"/>
</dbReference>
<dbReference type="HOGENOM" id="CLU_018869_0_1_9"/>
<dbReference type="OrthoDB" id="9807403at2"/>
<dbReference type="Proteomes" id="UP000000417">
    <property type="component" value="Chromosome"/>
</dbReference>
<dbReference type="GO" id="GO:0005737">
    <property type="term" value="C:cytoplasm"/>
    <property type="evidence" value="ECO:0007669"/>
    <property type="project" value="UniProtKB-SubCell"/>
</dbReference>
<dbReference type="GO" id="GO:0005524">
    <property type="term" value="F:ATP binding"/>
    <property type="evidence" value="ECO:0007669"/>
    <property type="project" value="UniProtKB-UniRule"/>
</dbReference>
<dbReference type="GO" id="GO:0032267">
    <property type="term" value="F:tRNA(Ile)-lysidine synthase activity"/>
    <property type="evidence" value="ECO:0007669"/>
    <property type="project" value="UniProtKB-EC"/>
</dbReference>
<dbReference type="GO" id="GO:0006400">
    <property type="term" value="P:tRNA modification"/>
    <property type="evidence" value="ECO:0007669"/>
    <property type="project" value="UniProtKB-UniRule"/>
</dbReference>
<dbReference type="CDD" id="cd01992">
    <property type="entry name" value="TilS_N"/>
    <property type="match status" value="1"/>
</dbReference>
<dbReference type="Gene3D" id="1.20.59.20">
    <property type="match status" value="1"/>
</dbReference>
<dbReference type="Gene3D" id="3.40.50.620">
    <property type="entry name" value="HUPs"/>
    <property type="match status" value="1"/>
</dbReference>
<dbReference type="HAMAP" id="MF_01161">
    <property type="entry name" value="tRNA_Ile_lys_synt"/>
    <property type="match status" value="1"/>
</dbReference>
<dbReference type="InterPro" id="IPR012796">
    <property type="entry name" value="Lysidine-tRNA-synth_C"/>
</dbReference>
<dbReference type="InterPro" id="IPR014729">
    <property type="entry name" value="Rossmann-like_a/b/a_fold"/>
</dbReference>
<dbReference type="InterPro" id="IPR011063">
    <property type="entry name" value="TilS/TtcA_N"/>
</dbReference>
<dbReference type="InterPro" id="IPR012094">
    <property type="entry name" value="tRNA_Ile_lys_synt"/>
</dbReference>
<dbReference type="InterPro" id="IPR012795">
    <property type="entry name" value="tRNA_Ile_lys_synt_N"/>
</dbReference>
<dbReference type="NCBIfam" id="TIGR02433">
    <property type="entry name" value="lysidine_TilS_C"/>
    <property type="match status" value="1"/>
</dbReference>
<dbReference type="NCBIfam" id="TIGR02432">
    <property type="entry name" value="lysidine_TilS_N"/>
    <property type="match status" value="1"/>
</dbReference>
<dbReference type="PANTHER" id="PTHR43033">
    <property type="entry name" value="TRNA(ILE)-LYSIDINE SYNTHASE-RELATED"/>
    <property type="match status" value="1"/>
</dbReference>
<dbReference type="PANTHER" id="PTHR43033:SF1">
    <property type="entry name" value="TRNA(ILE)-LYSIDINE SYNTHASE-RELATED"/>
    <property type="match status" value="1"/>
</dbReference>
<dbReference type="Pfam" id="PF01171">
    <property type="entry name" value="ATP_bind_3"/>
    <property type="match status" value="1"/>
</dbReference>
<dbReference type="Pfam" id="PF11734">
    <property type="entry name" value="TilS_C"/>
    <property type="match status" value="1"/>
</dbReference>
<dbReference type="SMART" id="SM00977">
    <property type="entry name" value="TilS_C"/>
    <property type="match status" value="1"/>
</dbReference>
<dbReference type="SUPFAM" id="SSF52402">
    <property type="entry name" value="Adenine nucleotide alpha hydrolases-like"/>
    <property type="match status" value="1"/>
</dbReference>
<dbReference type="SUPFAM" id="SSF82829">
    <property type="entry name" value="MesJ substrate recognition domain-like"/>
    <property type="match status" value="1"/>
</dbReference>
<dbReference type="SUPFAM" id="SSF56037">
    <property type="entry name" value="PheT/TilS domain"/>
    <property type="match status" value="1"/>
</dbReference>
<organism>
    <name type="scientific">Symbiobacterium thermophilum (strain DSM 24528 / JCM 14929 / IAM 14863 / T)</name>
    <dbReference type="NCBI Taxonomy" id="292459"/>
    <lineage>
        <taxon>Bacteria</taxon>
        <taxon>Bacillati</taxon>
        <taxon>Bacillota</taxon>
        <taxon>Clostridia</taxon>
        <taxon>Eubacteriales</taxon>
        <taxon>Symbiobacteriaceae</taxon>
        <taxon>Symbiobacterium</taxon>
    </lineage>
</organism>
<evidence type="ECO:0000255" key="1">
    <source>
        <dbReference type="HAMAP-Rule" id="MF_01161"/>
    </source>
</evidence>
<reference key="1">
    <citation type="journal article" date="2004" name="Nucleic Acids Res.">
        <title>Genome sequence of Symbiobacterium thermophilum, an uncultivable bacterium that depends on microbial commensalism.</title>
        <authorList>
            <person name="Ueda K."/>
            <person name="Yamashita A."/>
            <person name="Ishikawa J."/>
            <person name="Shimada M."/>
            <person name="Watsuji T."/>
            <person name="Morimura K."/>
            <person name="Ikeda H."/>
            <person name="Hattori M."/>
            <person name="Beppu T."/>
        </authorList>
    </citation>
    <scope>NUCLEOTIDE SEQUENCE [LARGE SCALE GENOMIC DNA]</scope>
    <source>
        <strain>DSM 24528 / JCM 14929 / IAM 14863 / T</strain>
    </source>
</reference>
<comment type="function">
    <text evidence="1">Ligates lysine onto the cytidine present at position 34 of the AUA codon-specific tRNA(Ile) that contains the anticodon CAU, in an ATP-dependent manner. Cytidine is converted to lysidine, thus changing the amino acid specificity of the tRNA from methionine to isoleucine.</text>
</comment>
<comment type="catalytic activity">
    <reaction evidence="1">
        <text>cytidine(34) in tRNA(Ile2) + L-lysine + ATP = lysidine(34) in tRNA(Ile2) + AMP + diphosphate + H(+)</text>
        <dbReference type="Rhea" id="RHEA:43744"/>
        <dbReference type="Rhea" id="RHEA-COMP:10625"/>
        <dbReference type="Rhea" id="RHEA-COMP:10670"/>
        <dbReference type="ChEBI" id="CHEBI:15378"/>
        <dbReference type="ChEBI" id="CHEBI:30616"/>
        <dbReference type="ChEBI" id="CHEBI:32551"/>
        <dbReference type="ChEBI" id="CHEBI:33019"/>
        <dbReference type="ChEBI" id="CHEBI:82748"/>
        <dbReference type="ChEBI" id="CHEBI:83665"/>
        <dbReference type="ChEBI" id="CHEBI:456215"/>
        <dbReference type="EC" id="6.3.4.19"/>
    </reaction>
</comment>
<comment type="subcellular location">
    <subcellularLocation>
        <location evidence="1">Cytoplasm</location>
    </subcellularLocation>
</comment>
<comment type="domain">
    <text>The N-terminal region contains the highly conserved SGGXDS motif, predicted to be a P-loop motif involved in ATP binding.</text>
</comment>
<comment type="similarity">
    <text evidence="1">Belongs to the tRNA(Ile)-lysidine synthase family.</text>
</comment>
<gene>
    <name evidence="1" type="primary">tilS</name>
    <name type="ordered locus">STH3199</name>
</gene>
<name>TILS_SYMTH</name>